<proteinExistence type="evidence at protein level"/>
<accession>Q4G0Z9</accession>
<accession>B4DYZ3</accession>
<accession>B4DZM4</accession>
<accession>B4E293</accession>
<accession>Q6P533</accession>
<accession>Q7Z3P4</accession>
<feature type="chain" id="PRO_0000255258" description="Minichromosome maintenance domain-containing protein 2">
    <location>
        <begin position="1"/>
        <end position="681"/>
    </location>
</feature>
<feature type="domain" description="MCM">
    <location>
        <begin position="533"/>
        <end position="621"/>
    </location>
</feature>
<feature type="modified residue" description="Phosphoserine" evidence="5">
    <location>
        <position position="292"/>
    </location>
</feature>
<feature type="splice variant" id="VSP_038998" description="In isoform 3." evidence="2">
    <location>
        <begin position="1"/>
        <end position="242"/>
    </location>
</feature>
<feature type="splice variant" id="VSP_038999" description="In isoform 4." evidence="2">
    <location>
        <begin position="1"/>
        <end position="63"/>
    </location>
</feature>
<feature type="splice variant" id="VSP_039000" description="In isoform 4." evidence="2">
    <original>HQPLKAAEVFQS</original>
    <variation>MIASTTMVRSAK</variation>
    <location>
        <begin position="64"/>
        <end position="75"/>
    </location>
</feature>
<feature type="splice variant" id="VSP_039001" description="In isoform 2." evidence="3">
    <location>
        <begin position="591"/>
        <end position="681"/>
    </location>
</feature>
<feature type="sequence variant" id="VAR_028861" description="In dbSNP:rs16933088.">
    <original>M</original>
    <variation>K</variation>
    <location>
        <position position="137"/>
    </location>
</feature>
<feature type="sequence variant" id="VAR_028862" description="In dbSNP:rs17332410.">
    <original>L</original>
    <variation>V</variation>
    <location>
        <position position="322"/>
    </location>
</feature>
<feature type="sequence variant" id="VAR_028863" description="In dbSNP:rs11778562.">
    <original>S</original>
    <variation>A</variation>
    <location>
        <position position="583"/>
    </location>
</feature>
<feature type="sequence conflict" description="In Ref. 1; BAG63905." evidence="4" ref="1">
    <original>T</original>
    <variation>M</variation>
    <location>
        <position position="94"/>
    </location>
</feature>
<feature type="sequence conflict" description="In Ref. 1; BAG65055." evidence="4" ref="1">
    <original>Y</original>
    <variation>H</variation>
    <location>
        <position position="164"/>
    </location>
</feature>
<feature type="sequence conflict" description="In Ref. 4; CAD97790." evidence="4" ref="4">
    <original>H</original>
    <variation>Q</variation>
    <location>
        <position position="168"/>
    </location>
</feature>
<feature type="sequence conflict" description="In Ref. 4; CAD97790." evidence="4" ref="4">
    <original>V</original>
    <variation>I</variation>
    <location>
        <position position="258"/>
    </location>
</feature>
<feature type="sequence conflict" description="In Ref. 1; BAG65055." evidence="4" ref="1">
    <original>L</original>
    <variation>F</variation>
    <location>
        <position position="366"/>
    </location>
</feature>
<evidence type="ECO:0000250" key="1">
    <source>
        <dbReference type="UniProtKB" id="E9Q956"/>
    </source>
</evidence>
<evidence type="ECO:0000303" key="2">
    <source>
    </source>
</evidence>
<evidence type="ECO:0000303" key="3">
    <source>
    </source>
</evidence>
<evidence type="ECO:0000305" key="4"/>
<evidence type="ECO:0007744" key="5">
    <source>
    </source>
</evidence>
<protein>
    <recommendedName>
        <fullName>Minichromosome maintenance domain-containing protein 2</fullName>
        <shortName>MCM domain-containing protein 2</shortName>
    </recommendedName>
</protein>
<keyword id="KW-0025">Alternative splicing</keyword>
<keyword id="KW-0227">DNA damage</keyword>
<keyword id="KW-0234">DNA repair</keyword>
<keyword id="KW-0469">Meiosis</keyword>
<keyword id="KW-0597">Phosphoprotein</keyword>
<keyword id="KW-1267">Proteomics identification</keyword>
<keyword id="KW-1185">Reference proteome</keyword>
<reference key="1">
    <citation type="journal article" date="2004" name="Nat. Genet.">
        <title>Complete sequencing and characterization of 21,243 full-length human cDNAs.</title>
        <authorList>
            <person name="Ota T."/>
            <person name="Suzuki Y."/>
            <person name="Nishikawa T."/>
            <person name="Otsuki T."/>
            <person name="Sugiyama T."/>
            <person name="Irie R."/>
            <person name="Wakamatsu A."/>
            <person name="Hayashi K."/>
            <person name="Sato H."/>
            <person name="Nagai K."/>
            <person name="Kimura K."/>
            <person name="Makita H."/>
            <person name="Sekine M."/>
            <person name="Obayashi M."/>
            <person name="Nishi T."/>
            <person name="Shibahara T."/>
            <person name="Tanaka T."/>
            <person name="Ishii S."/>
            <person name="Yamamoto J."/>
            <person name="Saito K."/>
            <person name="Kawai Y."/>
            <person name="Isono Y."/>
            <person name="Nakamura Y."/>
            <person name="Nagahari K."/>
            <person name="Murakami K."/>
            <person name="Yasuda T."/>
            <person name="Iwayanagi T."/>
            <person name="Wagatsuma M."/>
            <person name="Shiratori A."/>
            <person name="Sudo H."/>
            <person name="Hosoiri T."/>
            <person name="Kaku Y."/>
            <person name="Kodaira H."/>
            <person name="Kondo H."/>
            <person name="Sugawara M."/>
            <person name="Takahashi M."/>
            <person name="Kanda K."/>
            <person name="Yokoi T."/>
            <person name="Furuya T."/>
            <person name="Kikkawa E."/>
            <person name="Omura Y."/>
            <person name="Abe K."/>
            <person name="Kamihara K."/>
            <person name="Katsuta N."/>
            <person name="Sato K."/>
            <person name="Tanikawa M."/>
            <person name="Yamazaki M."/>
            <person name="Ninomiya K."/>
            <person name="Ishibashi T."/>
            <person name="Yamashita H."/>
            <person name="Murakawa K."/>
            <person name="Fujimori K."/>
            <person name="Tanai H."/>
            <person name="Kimata M."/>
            <person name="Watanabe M."/>
            <person name="Hiraoka S."/>
            <person name="Chiba Y."/>
            <person name="Ishida S."/>
            <person name="Ono Y."/>
            <person name="Takiguchi S."/>
            <person name="Watanabe S."/>
            <person name="Yosida M."/>
            <person name="Hotuta T."/>
            <person name="Kusano J."/>
            <person name="Kanehori K."/>
            <person name="Takahashi-Fujii A."/>
            <person name="Hara H."/>
            <person name="Tanase T.-O."/>
            <person name="Nomura Y."/>
            <person name="Togiya S."/>
            <person name="Komai F."/>
            <person name="Hara R."/>
            <person name="Takeuchi K."/>
            <person name="Arita M."/>
            <person name="Imose N."/>
            <person name="Musashino K."/>
            <person name="Yuuki H."/>
            <person name="Oshima A."/>
            <person name="Sasaki N."/>
            <person name="Aotsuka S."/>
            <person name="Yoshikawa Y."/>
            <person name="Matsunawa H."/>
            <person name="Ichihara T."/>
            <person name="Shiohata N."/>
            <person name="Sano S."/>
            <person name="Moriya S."/>
            <person name="Momiyama H."/>
            <person name="Satoh N."/>
            <person name="Takami S."/>
            <person name="Terashima Y."/>
            <person name="Suzuki O."/>
            <person name="Nakagawa S."/>
            <person name="Senoh A."/>
            <person name="Mizoguchi H."/>
            <person name="Goto Y."/>
            <person name="Shimizu F."/>
            <person name="Wakebe H."/>
            <person name="Hishigaki H."/>
            <person name="Watanabe T."/>
            <person name="Sugiyama A."/>
            <person name="Takemoto M."/>
            <person name="Kawakami B."/>
            <person name="Yamazaki M."/>
            <person name="Watanabe K."/>
            <person name="Kumagai A."/>
            <person name="Itakura S."/>
            <person name="Fukuzumi Y."/>
            <person name="Fujimori Y."/>
            <person name="Komiyama M."/>
            <person name="Tashiro H."/>
            <person name="Tanigami A."/>
            <person name="Fujiwara T."/>
            <person name="Ono T."/>
            <person name="Yamada K."/>
            <person name="Fujii Y."/>
            <person name="Ozaki K."/>
            <person name="Hirao M."/>
            <person name="Ohmori Y."/>
            <person name="Kawabata A."/>
            <person name="Hikiji T."/>
            <person name="Kobatake N."/>
            <person name="Inagaki H."/>
            <person name="Ikema Y."/>
            <person name="Okamoto S."/>
            <person name="Okitani R."/>
            <person name="Kawakami T."/>
            <person name="Noguchi S."/>
            <person name="Itoh T."/>
            <person name="Shigeta K."/>
            <person name="Senba T."/>
            <person name="Matsumura K."/>
            <person name="Nakajima Y."/>
            <person name="Mizuno T."/>
            <person name="Morinaga M."/>
            <person name="Sasaki M."/>
            <person name="Togashi T."/>
            <person name="Oyama M."/>
            <person name="Hata H."/>
            <person name="Watanabe M."/>
            <person name="Komatsu T."/>
            <person name="Mizushima-Sugano J."/>
            <person name="Satoh T."/>
            <person name="Shirai Y."/>
            <person name="Takahashi Y."/>
            <person name="Nakagawa K."/>
            <person name="Okumura K."/>
            <person name="Nagase T."/>
            <person name="Nomura N."/>
            <person name="Kikuchi H."/>
            <person name="Masuho Y."/>
            <person name="Yamashita R."/>
            <person name="Nakai K."/>
            <person name="Yada T."/>
            <person name="Nakamura Y."/>
            <person name="Ohara O."/>
            <person name="Isogai T."/>
            <person name="Sugano S."/>
        </authorList>
    </citation>
    <scope>NUCLEOTIDE SEQUENCE [LARGE SCALE MRNA] (ISOFORMS 1; 3 AND 4)</scope>
    <source>
        <tissue>Testis</tissue>
        <tissue>Trachea</tissue>
    </source>
</reference>
<reference key="2">
    <citation type="journal article" date="2006" name="Nature">
        <title>DNA sequence and analysis of human chromosome 8.</title>
        <authorList>
            <person name="Nusbaum C."/>
            <person name="Mikkelsen T.S."/>
            <person name="Zody M.C."/>
            <person name="Asakawa S."/>
            <person name="Taudien S."/>
            <person name="Garber M."/>
            <person name="Kodira C.D."/>
            <person name="Schueler M.G."/>
            <person name="Shimizu A."/>
            <person name="Whittaker C.A."/>
            <person name="Chang J.L."/>
            <person name="Cuomo C.A."/>
            <person name="Dewar K."/>
            <person name="FitzGerald M.G."/>
            <person name="Yang X."/>
            <person name="Allen N.R."/>
            <person name="Anderson S."/>
            <person name="Asakawa T."/>
            <person name="Blechschmidt K."/>
            <person name="Bloom T."/>
            <person name="Borowsky M.L."/>
            <person name="Butler J."/>
            <person name="Cook A."/>
            <person name="Corum B."/>
            <person name="DeArellano K."/>
            <person name="DeCaprio D."/>
            <person name="Dooley K.T."/>
            <person name="Dorris L. III"/>
            <person name="Engels R."/>
            <person name="Gloeckner G."/>
            <person name="Hafez N."/>
            <person name="Hagopian D.S."/>
            <person name="Hall J.L."/>
            <person name="Ishikawa S.K."/>
            <person name="Jaffe D.B."/>
            <person name="Kamat A."/>
            <person name="Kudoh J."/>
            <person name="Lehmann R."/>
            <person name="Lokitsang T."/>
            <person name="Macdonald P."/>
            <person name="Major J.E."/>
            <person name="Matthews C.D."/>
            <person name="Mauceli E."/>
            <person name="Menzel U."/>
            <person name="Mihalev A.H."/>
            <person name="Minoshima S."/>
            <person name="Murayama Y."/>
            <person name="Naylor J.W."/>
            <person name="Nicol R."/>
            <person name="Nguyen C."/>
            <person name="O'Leary S.B."/>
            <person name="O'Neill K."/>
            <person name="Parker S.C.J."/>
            <person name="Polley A."/>
            <person name="Raymond C.K."/>
            <person name="Reichwald K."/>
            <person name="Rodriguez J."/>
            <person name="Sasaki T."/>
            <person name="Schilhabel M."/>
            <person name="Siddiqui R."/>
            <person name="Smith C.L."/>
            <person name="Sneddon T.P."/>
            <person name="Talamas J.A."/>
            <person name="Tenzin P."/>
            <person name="Topham K."/>
            <person name="Venkataraman V."/>
            <person name="Wen G."/>
            <person name="Yamazaki S."/>
            <person name="Young S.K."/>
            <person name="Zeng Q."/>
            <person name="Zimmer A.R."/>
            <person name="Rosenthal A."/>
            <person name="Birren B.W."/>
            <person name="Platzer M."/>
            <person name="Shimizu N."/>
            <person name="Lander E.S."/>
        </authorList>
    </citation>
    <scope>NUCLEOTIDE SEQUENCE [LARGE SCALE GENOMIC DNA]</scope>
</reference>
<reference key="3">
    <citation type="journal article" date="2004" name="Genome Res.">
        <title>The status, quality, and expansion of the NIH full-length cDNA project: the Mammalian Gene Collection (MGC).</title>
        <authorList>
            <consortium name="The MGC Project Team"/>
        </authorList>
    </citation>
    <scope>NUCLEOTIDE SEQUENCE [LARGE SCALE MRNA] (ISOFORM 2)</scope>
    <source>
        <tissue>Lung</tissue>
        <tissue>Testis</tissue>
    </source>
</reference>
<reference key="4">
    <citation type="journal article" date="2007" name="BMC Genomics">
        <title>The full-ORF clone resource of the German cDNA consortium.</title>
        <authorList>
            <person name="Bechtel S."/>
            <person name="Rosenfelder H."/>
            <person name="Duda A."/>
            <person name="Schmidt C.P."/>
            <person name="Ernst U."/>
            <person name="Wellenreuther R."/>
            <person name="Mehrle A."/>
            <person name="Schuster C."/>
            <person name="Bahr A."/>
            <person name="Bloecker H."/>
            <person name="Heubner D."/>
            <person name="Hoerlein A."/>
            <person name="Michel G."/>
            <person name="Wedler H."/>
            <person name="Koehrer K."/>
            <person name="Ottenwaelder B."/>
            <person name="Poustka A."/>
            <person name="Wiemann S."/>
            <person name="Schupp I."/>
        </authorList>
    </citation>
    <scope>NUCLEOTIDE SEQUENCE [LARGE SCALE MRNA] OF 1-357</scope>
    <source>
        <tissue>Rectum tumor</tissue>
    </source>
</reference>
<reference key="5">
    <citation type="journal article" date="2008" name="Proc. Natl. Acad. Sci. U.S.A.">
        <title>A quantitative atlas of mitotic phosphorylation.</title>
        <authorList>
            <person name="Dephoure N."/>
            <person name="Zhou C."/>
            <person name="Villen J."/>
            <person name="Beausoleil S.A."/>
            <person name="Bakalarski C.E."/>
            <person name="Elledge S.J."/>
            <person name="Gygi S.P."/>
        </authorList>
    </citation>
    <scope>PHOSPHORYLATION [LARGE SCALE ANALYSIS] AT SER-292</scope>
    <scope>IDENTIFICATION BY MASS SPECTROMETRY [LARGE SCALE ANALYSIS]</scope>
    <source>
        <tissue>Cervix carcinoma</tissue>
    </source>
</reference>
<organism>
    <name type="scientific">Homo sapiens</name>
    <name type="common">Human</name>
    <dbReference type="NCBI Taxonomy" id="9606"/>
    <lineage>
        <taxon>Eukaryota</taxon>
        <taxon>Metazoa</taxon>
        <taxon>Chordata</taxon>
        <taxon>Craniata</taxon>
        <taxon>Vertebrata</taxon>
        <taxon>Euteleostomi</taxon>
        <taxon>Mammalia</taxon>
        <taxon>Eutheria</taxon>
        <taxon>Euarchontoglires</taxon>
        <taxon>Primates</taxon>
        <taxon>Haplorrhini</taxon>
        <taxon>Catarrhini</taxon>
        <taxon>Hominidae</taxon>
        <taxon>Homo</taxon>
    </lineage>
</organism>
<sequence length="681" mass="76219">MSNLKMKEAALIYLDRSGGLQKFIDDCKYYNDSKQSYAVYRFKILINPSDVVELDAELGNHILHQPLKAAEVFQSVCFIAVKTLSLIGQLQTETQINIVLKLTHLPPLPSYGLDLCEFPLDYTSQRFYMMQGIVIAMTTITKYTQGARFLCSDEACPLSKGFQYIRVHVPGATESATIRNDFLCNLCASSLQEDRKFRVLGDKQIVEIIATKALRAFQGYSNNQPFRFQSLTIFLRDESVNKMNIGNEYKIIGIPTCVKTSQTAVCIEANSITFCNSKVPSGISDNFRCLLSLTSSSCWKFTAILANIFASQITPPGTYNLLKLCLLMSLVQTTDRNKELEDCLDILIITSDTLLIDRLLNFSINLVPRGIRHLVSTEIFPTLSRNKYGTGAVSIQAGSALLAKGGICFIGDLASHKKDKLEQLQTVLESRSITVYIPGKKFGEDIDQQMTFPVQCSFWSFVDVDSSSRRNAQKINTLIGQMDCSLIPANLVEAFGLLINCNESSPCHPFLPTVQHTLNKAINPEGLFYAASRQFTTEDFEKLLAFAKNLNVEFSLEAERMTHGYYLASRRIRTGSVCGSKLSASALKYLVFLSEAHARLNLRNKVLKEDVLIAALLFETSLTLKYGATVFCVAPNAVFPFELYNEEYLEQRDLYLTQCQQQLEQFIATYGPGTTIFSSDE</sequence>
<dbReference type="EMBL" id="AK302672">
    <property type="protein sequence ID" value="BAG63905.1"/>
    <property type="molecule type" value="mRNA"/>
</dbReference>
<dbReference type="EMBL" id="AK303003">
    <property type="protein sequence ID" value="BAG64136.1"/>
    <property type="molecule type" value="mRNA"/>
</dbReference>
<dbReference type="EMBL" id="AK304170">
    <property type="protein sequence ID" value="BAG65055.1"/>
    <property type="molecule type" value="mRNA"/>
</dbReference>
<dbReference type="EMBL" id="AC011031">
    <property type="status" value="NOT_ANNOTATED_CDS"/>
    <property type="molecule type" value="Genomic_DNA"/>
</dbReference>
<dbReference type="EMBL" id="BC034576">
    <property type="protein sequence ID" value="AAH34576.2"/>
    <property type="status" value="ALT_INIT"/>
    <property type="molecule type" value="mRNA"/>
</dbReference>
<dbReference type="EMBL" id="BC063108">
    <property type="protein sequence ID" value="AAH63108.1"/>
    <property type="status" value="ALT_INIT"/>
    <property type="molecule type" value="mRNA"/>
</dbReference>
<dbReference type="EMBL" id="BX537587">
    <property type="protein sequence ID" value="CAD97790.2"/>
    <property type="molecule type" value="mRNA"/>
</dbReference>
<dbReference type="CCDS" id="CCDS47869.1">
    <molecule id="Q4G0Z9-2"/>
</dbReference>
<dbReference type="CCDS" id="CCDS6197.2">
    <molecule id="Q4G0Z9-1"/>
</dbReference>
<dbReference type="RefSeq" id="NP_001129633.1">
    <molecule id="Q4G0Z9-2"/>
    <property type="nucleotide sequence ID" value="NM_001136161.2"/>
</dbReference>
<dbReference type="RefSeq" id="NP_775789.3">
    <molecule id="Q4G0Z9-1"/>
    <property type="nucleotide sequence ID" value="NM_173518.4"/>
</dbReference>
<dbReference type="RefSeq" id="XP_005251231.1">
    <molecule id="Q4G0Z9-4"/>
    <property type="nucleotide sequence ID" value="XM_005251174.3"/>
</dbReference>
<dbReference type="RefSeq" id="XP_006716496.1">
    <property type="nucleotide sequence ID" value="XM_006716433.3"/>
</dbReference>
<dbReference type="RefSeq" id="XP_054215828.1">
    <molecule id="Q4G0Z9-4"/>
    <property type="nucleotide sequence ID" value="XM_054359853.1"/>
</dbReference>
<dbReference type="SMR" id="Q4G0Z9"/>
<dbReference type="BioGRID" id="127624">
    <property type="interactions" value="3"/>
</dbReference>
<dbReference type="FunCoup" id="Q4G0Z9">
    <property type="interactions" value="46"/>
</dbReference>
<dbReference type="IntAct" id="Q4G0Z9">
    <property type="interactions" value="1"/>
</dbReference>
<dbReference type="STRING" id="9606.ENSP00000413632"/>
<dbReference type="GlyGen" id="Q4G0Z9">
    <property type="glycosylation" value="1 site"/>
</dbReference>
<dbReference type="iPTMnet" id="Q4G0Z9"/>
<dbReference type="PhosphoSitePlus" id="Q4G0Z9"/>
<dbReference type="BioMuta" id="MCMDC2"/>
<dbReference type="DMDM" id="294862519"/>
<dbReference type="jPOST" id="Q4G0Z9"/>
<dbReference type="MassIVE" id="Q4G0Z9"/>
<dbReference type="PaxDb" id="9606-ENSP00000413632"/>
<dbReference type="PeptideAtlas" id="Q4G0Z9"/>
<dbReference type="ProteomicsDB" id="62145">
    <molecule id="Q4G0Z9-1"/>
</dbReference>
<dbReference type="ProteomicsDB" id="62146">
    <molecule id="Q4G0Z9-2"/>
</dbReference>
<dbReference type="ProteomicsDB" id="62147">
    <molecule id="Q4G0Z9-3"/>
</dbReference>
<dbReference type="ProteomicsDB" id="62148">
    <molecule id="Q4G0Z9-4"/>
</dbReference>
<dbReference type="Antibodypedia" id="24923">
    <property type="antibodies" value="80 antibodies from 15 providers"/>
</dbReference>
<dbReference type="DNASU" id="157777"/>
<dbReference type="Ensembl" id="ENST00000396592.7">
    <molecule id="Q4G0Z9-2"/>
    <property type="protein sequence ID" value="ENSP00000379837.3"/>
    <property type="gene ID" value="ENSG00000178460.18"/>
</dbReference>
<dbReference type="Ensembl" id="ENST00000422365.7">
    <molecule id="Q4G0Z9-1"/>
    <property type="protein sequence ID" value="ENSP00000413632.2"/>
    <property type="gene ID" value="ENSG00000178460.18"/>
</dbReference>
<dbReference type="GeneID" id="157777"/>
<dbReference type="KEGG" id="hsa:157777"/>
<dbReference type="MANE-Select" id="ENST00000422365.7">
    <property type="protein sequence ID" value="ENSP00000413632.2"/>
    <property type="RefSeq nucleotide sequence ID" value="NM_173518.5"/>
    <property type="RefSeq protein sequence ID" value="NP_775789.3"/>
</dbReference>
<dbReference type="UCSC" id="uc003xwz.4">
    <molecule id="Q4G0Z9-1"/>
    <property type="organism name" value="human"/>
</dbReference>
<dbReference type="AGR" id="HGNC:26368"/>
<dbReference type="CTD" id="157777"/>
<dbReference type="DisGeNET" id="157777"/>
<dbReference type="GeneCards" id="MCMDC2"/>
<dbReference type="HGNC" id="HGNC:26368">
    <property type="gene designation" value="MCMDC2"/>
</dbReference>
<dbReference type="HPA" id="ENSG00000178460">
    <property type="expression patterns" value="Tissue enhanced (testis)"/>
</dbReference>
<dbReference type="MalaCards" id="MCMDC2"/>
<dbReference type="MIM" id="617545">
    <property type="type" value="gene"/>
</dbReference>
<dbReference type="neXtProt" id="NX_Q4G0Z9"/>
<dbReference type="OpenTargets" id="ENSG00000178460"/>
<dbReference type="PharmGKB" id="PA142672364"/>
<dbReference type="VEuPathDB" id="HostDB:ENSG00000178460"/>
<dbReference type="eggNOG" id="KOG0480">
    <property type="taxonomic scope" value="Eukaryota"/>
</dbReference>
<dbReference type="GeneTree" id="ENSGT01110000267230"/>
<dbReference type="InParanoid" id="Q4G0Z9"/>
<dbReference type="OMA" id="SICLVPR"/>
<dbReference type="OrthoDB" id="2015372at2759"/>
<dbReference type="PAN-GO" id="Q4G0Z9">
    <property type="GO annotations" value="1 GO annotation based on evolutionary models"/>
</dbReference>
<dbReference type="PhylomeDB" id="Q4G0Z9"/>
<dbReference type="TreeFam" id="TF332272"/>
<dbReference type="PathwayCommons" id="Q4G0Z9"/>
<dbReference type="SignaLink" id="Q4G0Z9"/>
<dbReference type="BioGRID-ORCS" id="157777">
    <property type="hits" value="37 hits in 1143 CRISPR screens"/>
</dbReference>
<dbReference type="ChiTaRS" id="MCMDC2">
    <property type="organism name" value="human"/>
</dbReference>
<dbReference type="GenomeRNAi" id="157777"/>
<dbReference type="Pharos" id="Q4G0Z9">
    <property type="development level" value="Tbio"/>
</dbReference>
<dbReference type="PRO" id="PR:Q4G0Z9"/>
<dbReference type="Proteomes" id="UP000005640">
    <property type="component" value="Chromosome 8"/>
</dbReference>
<dbReference type="RNAct" id="Q4G0Z9">
    <property type="molecule type" value="protein"/>
</dbReference>
<dbReference type="Bgee" id="ENSG00000178460">
    <property type="expression patterns" value="Expressed in male germ line stem cell (sensu Vertebrata) in testis and 98 other cell types or tissues"/>
</dbReference>
<dbReference type="ExpressionAtlas" id="Q4G0Z9">
    <property type="expression patterns" value="baseline and differential"/>
</dbReference>
<dbReference type="GO" id="GO:0005634">
    <property type="term" value="C:nucleus"/>
    <property type="evidence" value="ECO:0000318"/>
    <property type="project" value="GO_Central"/>
</dbReference>
<dbReference type="GO" id="GO:0005524">
    <property type="term" value="F:ATP binding"/>
    <property type="evidence" value="ECO:0007669"/>
    <property type="project" value="InterPro"/>
</dbReference>
<dbReference type="GO" id="GO:0003677">
    <property type="term" value="F:DNA binding"/>
    <property type="evidence" value="ECO:0007669"/>
    <property type="project" value="InterPro"/>
</dbReference>
<dbReference type="GO" id="GO:1990918">
    <property type="term" value="P:double-strand break repair involved in meiotic recombination"/>
    <property type="evidence" value="ECO:0007669"/>
    <property type="project" value="Ensembl"/>
</dbReference>
<dbReference type="GO" id="GO:0000727">
    <property type="term" value="P:double-strand break repair via break-induced replication"/>
    <property type="evidence" value="ECO:0000318"/>
    <property type="project" value="GO_Central"/>
</dbReference>
<dbReference type="GO" id="GO:0042140">
    <property type="term" value="P:late meiotic recombination nodule assembly"/>
    <property type="evidence" value="ECO:0007669"/>
    <property type="project" value="Ensembl"/>
</dbReference>
<dbReference type="GO" id="GO:0048477">
    <property type="term" value="P:oogenesis"/>
    <property type="evidence" value="ECO:0007669"/>
    <property type="project" value="Ensembl"/>
</dbReference>
<dbReference type="GO" id="GO:0007283">
    <property type="term" value="P:spermatogenesis"/>
    <property type="evidence" value="ECO:0007669"/>
    <property type="project" value="Ensembl"/>
</dbReference>
<dbReference type="GO" id="GO:0007130">
    <property type="term" value="P:synaptonemal complex assembly"/>
    <property type="evidence" value="ECO:0007669"/>
    <property type="project" value="Ensembl"/>
</dbReference>
<dbReference type="FunFam" id="3.40.50.300:FF:001155">
    <property type="entry name" value="minichromosome maintenance domain-containing protein 2"/>
    <property type="match status" value="1"/>
</dbReference>
<dbReference type="Gene3D" id="3.40.50.300">
    <property type="entry name" value="P-loop containing nucleotide triphosphate hydrolases"/>
    <property type="match status" value="1"/>
</dbReference>
<dbReference type="InterPro" id="IPR031327">
    <property type="entry name" value="MCM"/>
</dbReference>
<dbReference type="InterPro" id="IPR041562">
    <property type="entry name" value="MCM_lid"/>
</dbReference>
<dbReference type="InterPro" id="IPR027417">
    <property type="entry name" value="P-loop_NTPase"/>
</dbReference>
<dbReference type="PANTHER" id="PTHR11630">
    <property type="entry name" value="DNA REPLICATION LICENSING FACTOR MCM FAMILY MEMBER"/>
    <property type="match status" value="1"/>
</dbReference>
<dbReference type="PANTHER" id="PTHR11630:SF75">
    <property type="entry name" value="MINICHROMOSOME MAINTENANCE DOMAIN-CONTAINING PROTEIN 2"/>
    <property type="match status" value="1"/>
</dbReference>
<dbReference type="Pfam" id="PF17855">
    <property type="entry name" value="MCM_lid"/>
    <property type="match status" value="1"/>
</dbReference>
<dbReference type="SMART" id="SM00350">
    <property type="entry name" value="MCM"/>
    <property type="match status" value="1"/>
</dbReference>
<comment type="function">
    <text evidence="1">Plays an important role in meiotic recombination and associated DNA double-strand break repair.</text>
</comment>
<comment type="interaction">
    <interactant intactId="EBI-14506480">
        <id>Q4G0Z9</id>
    </interactant>
    <interactant intactId="EBI-1044504">
        <id>Q9BS40</id>
        <label>LXN</label>
    </interactant>
    <organismsDiffer>false</organismsDiffer>
    <experiments>3</experiments>
</comment>
<comment type="alternative products">
    <event type="alternative splicing"/>
    <isoform>
        <id>Q4G0Z9-1</id>
        <name>1</name>
        <sequence type="displayed"/>
    </isoform>
    <isoform>
        <id>Q4G0Z9-2</id>
        <name>2</name>
        <sequence type="described" ref="VSP_039001"/>
    </isoform>
    <isoform>
        <id>Q4G0Z9-3</id>
        <name>3</name>
        <sequence type="described" ref="VSP_038998"/>
    </isoform>
    <isoform>
        <id>Q4G0Z9-4</id>
        <name>4</name>
        <sequence type="described" ref="VSP_038999 VSP_039000"/>
    </isoform>
</comment>
<comment type="sequence caution" evidence="4">
    <conflict type="erroneous initiation">
        <sequence resource="EMBL-CDS" id="AAH34576"/>
    </conflict>
    <text>Truncated N-terminus.</text>
</comment>
<comment type="sequence caution" evidence="4">
    <conflict type="erroneous initiation">
        <sequence resource="EMBL-CDS" id="AAH63108"/>
    </conflict>
    <text>Truncated N-terminus.</text>
</comment>
<gene>
    <name type="primary">MCMDC2</name>
    <name type="synonym">C8orf45</name>
</gene>
<name>MCMD2_HUMAN</name>